<evidence type="ECO:0000255" key="1">
    <source>
        <dbReference type="HAMAP-Rule" id="MF_00099"/>
    </source>
</evidence>
<sequence>MTVVSPIRVLVVDDSAFARKVLRQVLSSAEGLEVVGVARDGLDALEKVAELSPDVLTLDLVMPGLDGLGVLRALASSAAAPRVVVVSSAGEESELAVAALQAGAVELVNKPTALATERLYELGGELVAKVRTAAGAVARAPPEPAPSPEATSAPVARAAAKSLVVVGTSTGGPQALTRLLSELPVDFPAPLALALHIPTGYTEAVARRLNAHCALEVFEAVDGLELRPGRVVLARSGQHLKLERHGPVTLARLDRQPLRTAHHPSVDVLFESAARSWGSDVVGLVLTGMGDDGVAGARAIREAGGTVLTESESSCVVYGMPRAVKEAGLATDSAPLEGMLALLRRHVR</sequence>
<reference key="1">
    <citation type="journal article" date="2006" name="Proc. Natl. Acad. Sci. U.S.A.">
        <title>Evolution of sensory complexity recorded in a myxobacterial genome.</title>
        <authorList>
            <person name="Goldman B.S."/>
            <person name="Nierman W.C."/>
            <person name="Kaiser D."/>
            <person name="Slater S.C."/>
            <person name="Durkin A.S."/>
            <person name="Eisen J.A."/>
            <person name="Ronning C.M."/>
            <person name="Barbazuk W.B."/>
            <person name="Blanchard M."/>
            <person name="Field C."/>
            <person name="Halling C."/>
            <person name="Hinkle G."/>
            <person name="Iartchuk O."/>
            <person name="Kim H.S."/>
            <person name="Mackenzie C."/>
            <person name="Madupu R."/>
            <person name="Miller N."/>
            <person name="Shvartsbeyn A."/>
            <person name="Sullivan S.A."/>
            <person name="Vaudin M."/>
            <person name="Wiegand R."/>
            <person name="Kaplan H.B."/>
        </authorList>
    </citation>
    <scope>NUCLEOTIDE SEQUENCE [LARGE SCALE GENOMIC DNA]</scope>
    <source>
        <strain>DK1622</strain>
    </source>
</reference>
<accession>Q1CWZ9</accession>
<dbReference type="EC" id="3.1.1.61" evidence="1"/>
<dbReference type="EC" id="3.5.1.44" evidence="1"/>
<dbReference type="EMBL" id="CP000113">
    <property type="protein sequence ID" value="ABF87336.1"/>
    <property type="molecule type" value="Genomic_DNA"/>
</dbReference>
<dbReference type="RefSeq" id="WP_011556880.1">
    <property type="nucleotide sequence ID" value="NC_008095.1"/>
</dbReference>
<dbReference type="SMR" id="Q1CWZ9"/>
<dbReference type="STRING" id="246197.MXAN_6959"/>
<dbReference type="EnsemblBacteria" id="ABF87336">
    <property type="protein sequence ID" value="ABF87336"/>
    <property type="gene ID" value="MXAN_6959"/>
</dbReference>
<dbReference type="GeneID" id="41364137"/>
<dbReference type="KEGG" id="mxa:MXAN_6959"/>
<dbReference type="eggNOG" id="COG2201">
    <property type="taxonomic scope" value="Bacteria"/>
</dbReference>
<dbReference type="HOGENOM" id="CLU_000445_51_0_7"/>
<dbReference type="OrthoDB" id="9793421at2"/>
<dbReference type="Proteomes" id="UP000002402">
    <property type="component" value="Chromosome"/>
</dbReference>
<dbReference type="GO" id="GO:0005737">
    <property type="term" value="C:cytoplasm"/>
    <property type="evidence" value="ECO:0007669"/>
    <property type="project" value="UniProtKB-SubCell"/>
</dbReference>
<dbReference type="GO" id="GO:0000156">
    <property type="term" value="F:phosphorelay response regulator activity"/>
    <property type="evidence" value="ECO:0007669"/>
    <property type="project" value="InterPro"/>
</dbReference>
<dbReference type="GO" id="GO:0008984">
    <property type="term" value="F:protein-glutamate methylesterase activity"/>
    <property type="evidence" value="ECO:0007669"/>
    <property type="project" value="UniProtKB-UniRule"/>
</dbReference>
<dbReference type="GO" id="GO:0050568">
    <property type="term" value="F:protein-glutamine glutaminase activity"/>
    <property type="evidence" value="ECO:0007669"/>
    <property type="project" value="UniProtKB-UniRule"/>
</dbReference>
<dbReference type="GO" id="GO:0006935">
    <property type="term" value="P:chemotaxis"/>
    <property type="evidence" value="ECO:0007669"/>
    <property type="project" value="UniProtKB-UniRule"/>
</dbReference>
<dbReference type="CDD" id="cd16432">
    <property type="entry name" value="CheB_Rec"/>
    <property type="match status" value="1"/>
</dbReference>
<dbReference type="CDD" id="cd17541">
    <property type="entry name" value="REC_CheB-like"/>
    <property type="match status" value="1"/>
</dbReference>
<dbReference type="Gene3D" id="3.40.50.2300">
    <property type="match status" value="1"/>
</dbReference>
<dbReference type="Gene3D" id="3.40.50.180">
    <property type="entry name" value="Methylesterase CheB, C-terminal domain"/>
    <property type="match status" value="1"/>
</dbReference>
<dbReference type="HAMAP" id="MF_00099">
    <property type="entry name" value="CheB_chemtxs"/>
    <property type="match status" value="1"/>
</dbReference>
<dbReference type="InterPro" id="IPR008248">
    <property type="entry name" value="CheB-like"/>
</dbReference>
<dbReference type="InterPro" id="IPR035909">
    <property type="entry name" value="CheB_C"/>
</dbReference>
<dbReference type="InterPro" id="IPR011006">
    <property type="entry name" value="CheY-like_superfamily"/>
</dbReference>
<dbReference type="InterPro" id="IPR000673">
    <property type="entry name" value="Sig_transdc_resp-reg_Me-estase"/>
</dbReference>
<dbReference type="InterPro" id="IPR001789">
    <property type="entry name" value="Sig_transdc_resp-reg_receiver"/>
</dbReference>
<dbReference type="NCBIfam" id="NF001965">
    <property type="entry name" value="PRK00742.1"/>
    <property type="match status" value="1"/>
</dbReference>
<dbReference type="PANTHER" id="PTHR42872">
    <property type="entry name" value="PROTEIN-GLUTAMATE METHYLESTERASE/PROTEIN-GLUTAMINE GLUTAMINASE"/>
    <property type="match status" value="1"/>
</dbReference>
<dbReference type="PANTHER" id="PTHR42872:SF3">
    <property type="entry name" value="PROTEIN-GLUTAMATE METHYLESTERASE_PROTEIN-GLUTAMINE GLUTAMINASE 1"/>
    <property type="match status" value="1"/>
</dbReference>
<dbReference type="Pfam" id="PF01339">
    <property type="entry name" value="CheB_methylest"/>
    <property type="match status" value="1"/>
</dbReference>
<dbReference type="Pfam" id="PF00072">
    <property type="entry name" value="Response_reg"/>
    <property type="match status" value="1"/>
</dbReference>
<dbReference type="PIRSF" id="PIRSF000876">
    <property type="entry name" value="RR_chemtxs_CheB"/>
    <property type="match status" value="1"/>
</dbReference>
<dbReference type="SMART" id="SM00448">
    <property type="entry name" value="REC"/>
    <property type="match status" value="1"/>
</dbReference>
<dbReference type="SUPFAM" id="SSF52172">
    <property type="entry name" value="CheY-like"/>
    <property type="match status" value="1"/>
</dbReference>
<dbReference type="SUPFAM" id="SSF52738">
    <property type="entry name" value="Methylesterase CheB, C-terminal domain"/>
    <property type="match status" value="1"/>
</dbReference>
<dbReference type="PROSITE" id="PS50122">
    <property type="entry name" value="CHEB"/>
    <property type="match status" value="1"/>
</dbReference>
<dbReference type="PROSITE" id="PS50110">
    <property type="entry name" value="RESPONSE_REGULATORY"/>
    <property type="match status" value="1"/>
</dbReference>
<name>CHEB5_MYXXD</name>
<organism>
    <name type="scientific">Myxococcus xanthus (strain DK1622)</name>
    <dbReference type="NCBI Taxonomy" id="246197"/>
    <lineage>
        <taxon>Bacteria</taxon>
        <taxon>Pseudomonadati</taxon>
        <taxon>Myxococcota</taxon>
        <taxon>Myxococcia</taxon>
        <taxon>Myxococcales</taxon>
        <taxon>Cystobacterineae</taxon>
        <taxon>Myxococcaceae</taxon>
        <taxon>Myxococcus</taxon>
    </lineage>
</organism>
<protein>
    <recommendedName>
        <fullName evidence="1">Protein-glutamate methylesterase/protein-glutamine glutaminase 5</fullName>
        <ecNumber evidence="1">3.1.1.61</ecNumber>
        <ecNumber evidence="1">3.5.1.44</ecNumber>
    </recommendedName>
</protein>
<feature type="chain" id="PRO_0000264296" description="Protein-glutamate methylesterase/protein-glutamine glutaminase 5">
    <location>
        <begin position="1"/>
        <end position="348"/>
    </location>
</feature>
<feature type="domain" description="Response regulatory" evidence="1">
    <location>
        <begin position="8"/>
        <end position="125"/>
    </location>
</feature>
<feature type="domain" description="CheB-type methylesterase" evidence="1">
    <location>
        <begin position="157"/>
        <end position="348"/>
    </location>
</feature>
<feature type="active site" evidence="1">
    <location>
        <position position="169"/>
    </location>
</feature>
<feature type="active site" evidence="1">
    <location>
        <position position="196"/>
    </location>
</feature>
<feature type="active site" evidence="1">
    <location>
        <position position="292"/>
    </location>
</feature>
<feature type="modified residue" description="4-aspartylphosphate" evidence="1">
    <location>
        <position position="59"/>
    </location>
</feature>
<comment type="function">
    <text evidence="1">Involved in chemotaxis. Part of a chemotaxis signal transduction system that modulates chemotaxis in response to various stimuli. Catalyzes the demethylation of specific methylglutamate residues introduced into the chemoreceptors (methyl-accepting chemotaxis proteins or MCP) by CheR. Also mediates the irreversible deamidation of specific glutamine residues to glutamic acid.</text>
</comment>
<comment type="catalytic activity">
    <reaction evidence="1">
        <text>[protein]-L-glutamate 5-O-methyl ester + H2O = L-glutamyl-[protein] + methanol + H(+)</text>
        <dbReference type="Rhea" id="RHEA:23236"/>
        <dbReference type="Rhea" id="RHEA-COMP:10208"/>
        <dbReference type="Rhea" id="RHEA-COMP:10311"/>
        <dbReference type="ChEBI" id="CHEBI:15377"/>
        <dbReference type="ChEBI" id="CHEBI:15378"/>
        <dbReference type="ChEBI" id="CHEBI:17790"/>
        <dbReference type="ChEBI" id="CHEBI:29973"/>
        <dbReference type="ChEBI" id="CHEBI:82795"/>
        <dbReference type="EC" id="3.1.1.61"/>
    </reaction>
</comment>
<comment type="catalytic activity">
    <reaction evidence="1">
        <text>L-glutaminyl-[protein] + H2O = L-glutamyl-[protein] + NH4(+)</text>
        <dbReference type="Rhea" id="RHEA:16441"/>
        <dbReference type="Rhea" id="RHEA-COMP:10207"/>
        <dbReference type="Rhea" id="RHEA-COMP:10208"/>
        <dbReference type="ChEBI" id="CHEBI:15377"/>
        <dbReference type="ChEBI" id="CHEBI:28938"/>
        <dbReference type="ChEBI" id="CHEBI:29973"/>
        <dbReference type="ChEBI" id="CHEBI:30011"/>
        <dbReference type="EC" id="3.5.1.44"/>
    </reaction>
</comment>
<comment type="subcellular location">
    <subcellularLocation>
        <location evidence="1">Cytoplasm</location>
    </subcellularLocation>
</comment>
<comment type="domain">
    <text evidence="1">Contains a C-terminal catalytic domain, and an N-terminal region which modulates catalytic activity.</text>
</comment>
<comment type="PTM">
    <text evidence="1">Phosphorylated by CheA. Phosphorylation of the N-terminal regulatory domain activates the methylesterase activity.</text>
</comment>
<comment type="similarity">
    <text evidence="1">Belongs to the CheB family.</text>
</comment>
<gene>
    <name evidence="1" type="primary">cheB5</name>
    <name type="ordered locus">MXAN_6959</name>
</gene>
<proteinExistence type="inferred from homology"/>
<keyword id="KW-0145">Chemotaxis</keyword>
<keyword id="KW-0963">Cytoplasm</keyword>
<keyword id="KW-0378">Hydrolase</keyword>
<keyword id="KW-0597">Phosphoprotein</keyword>
<keyword id="KW-1185">Reference proteome</keyword>